<reference key="1">
    <citation type="journal article" date="2008" name="Cell. Mol. Life Sci.">
        <title>Molecular diversity and evolution of cystine knot toxins of the tarantula Chilobrachys jingzhao.</title>
        <authorList>
            <person name="Chen J."/>
            <person name="Deng M."/>
            <person name="He Q."/>
            <person name="Meng E."/>
            <person name="Jiang L."/>
            <person name="Liao Z."/>
            <person name="Rong M."/>
            <person name="Liang S."/>
        </authorList>
    </citation>
    <scope>NUCLEOTIDE SEQUENCE [LARGE SCALE MRNA]</scope>
    <source>
        <tissue>Venom gland</tissue>
    </source>
</reference>
<name>JZ20B_CHIGU</name>
<dbReference type="EMBL" id="EU233901">
    <property type="protein sequence ID" value="ABY71720.1"/>
    <property type="molecule type" value="mRNA"/>
</dbReference>
<dbReference type="SMR" id="B1P1H0"/>
<dbReference type="ArachnoServer" id="AS000848">
    <property type="toxin name" value="U23-theraphotoxin-Cg1a"/>
</dbReference>
<dbReference type="GO" id="GO:0005576">
    <property type="term" value="C:extracellular region"/>
    <property type="evidence" value="ECO:0007669"/>
    <property type="project" value="UniProtKB-SubCell"/>
</dbReference>
<dbReference type="GO" id="GO:0099106">
    <property type="term" value="F:ion channel regulator activity"/>
    <property type="evidence" value="ECO:0007669"/>
    <property type="project" value="UniProtKB-KW"/>
</dbReference>
<dbReference type="GO" id="GO:0090729">
    <property type="term" value="F:toxin activity"/>
    <property type="evidence" value="ECO:0007669"/>
    <property type="project" value="UniProtKB-KW"/>
</dbReference>
<feature type="signal peptide" evidence="2">
    <location>
        <begin position="1"/>
        <end status="unknown"/>
    </location>
</feature>
<feature type="propeptide" id="PRO_0000398437" evidence="1">
    <location>
        <begin status="unknown"/>
        <end position="21"/>
    </location>
</feature>
<feature type="peptide" id="PRO_0000398438" description="U23-theraphotoxin-Cg1a 2">
    <location>
        <begin position="22"/>
        <end position="50"/>
    </location>
</feature>
<feature type="disulfide bond" evidence="1">
    <location>
        <begin position="22"/>
        <end position="36"/>
    </location>
</feature>
<feature type="disulfide bond" evidence="1">
    <location>
        <begin position="29"/>
        <end position="41"/>
    </location>
</feature>
<feature type="disulfide bond" evidence="1">
    <location>
        <begin position="35"/>
        <end position="47"/>
    </location>
</feature>
<proteinExistence type="evidence at transcript level"/>
<keyword id="KW-1015">Disulfide bond</keyword>
<keyword id="KW-0872">Ion channel impairing toxin</keyword>
<keyword id="KW-0960">Knottin</keyword>
<keyword id="KW-0964">Secreted</keyword>
<keyword id="KW-0732">Signal</keyword>
<keyword id="KW-0800">Toxin</keyword>
<sequence length="50" mass="5918">MYDEILSAFFEVNDELQSEARCGEKNDRCKTNQDCCSGFRCTKFRRCGRR</sequence>
<protein>
    <recommendedName>
        <fullName>U23-theraphotoxin-Cg1a 2</fullName>
        <shortName>U23-TRTX-Cg1a</shortName>
    </recommendedName>
    <alternativeName>
        <fullName evidence="4">Jingzhaotoxin-20.2</fullName>
        <shortName evidence="4">JZTX-20.2</shortName>
    </alternativeName>
</protein>
<organism>
    <name type="scientific">Chilobrachys guangxiensis</name>
    <name type="common">Chinese earth tiger tarantula</name>
    <name type="synonym">Chilobrachys jingzhao</name>
    <dbReference type="NCBI Taxonomy" id="278060"/>
    <lineage>
        <taxon>Eukaryota</taxon>
        <taxon>Metazoa</taxon>
        <taxon>Ecdysozoa</taxon>
        <taxon>Arthropoda</taxon>
        <taxon>Chelicerata</taxon>
        <taxon>Arachnida</taxon>
        <taxon>Araneae</taxon>
        <taxon>Mygalomorphae</taxon>
        <taxon>Theraphosidae</taxon>
        <taxon>Chilobrachys</taxon>
    </lineage>
</organism>
<comment type="function">
    <text>Probable ion channel inhibitor.</text>
</comment>
<comment type="subcellular location">
    <subcellularLocation>
        <location evidence="1">Secreted</location>
    </subcellularLocation>
</comment>
<comment type="tissue specificity">
    <text>Expressed by the venom gland.</text>
</comment>
<comment type="domain">
    <text evidence="1">The presence of a 'disulfide through disulfide knot' structurally defines this protein as a knottin.</text>
</comment>
<comment type="similarity">
    <text evidence="3">Belongs to the neurotoxin 10 (Hwtx-1) family. 64 (Jztx-20) subfamily.</text>
</comment>
<evidence type="ECO:0000250" key="1"/>
<evidence type="ECO:0000255" key="2"/>
<evidence type="ECO:0000305" key="3"/>
<evidence type="ECO:0000312" key="4">
    <source>
        <dbReference type="EMBL" id="ABY71720.1"/>
    </source>
</evidence>
<accession>B1P1H0</accession>